<name>PDRP_RICAE</name>
<comment type="function">
    <text evidence="1">Bifunctional serine/threonine kinase and phosphorylase involved in the regulation of the pyruvate, phosphate dikinase (PPDK) by catalyzing its phosphorylation/dephosphorylation.</text>
</comment>
<comment type="catalytic activity">
    <reaction evidence="1">
        <text>N(tele)-phospho-L-histidyl/L-threonyl-[pyruvate, phosphate dikinase] + ADP = N(tele)-phospho-L-histidyl/O-phospho-L-threonyl-[pyruvate, phosphate dikinase] + AMP + H(+)</text>
        <dbReference type="Rhea" id="RHEA:43692"/>
        <dbReference type="Rhea" id="RHEA-COMP:10650"/>
        <dbReference type="Rhea" id="RHEA-COMP:10651"/>
        <dbReference type="ChEBI" id="CHEBI:15378"/>
        <dbReference type="ChEBI" id="CHEBI:30013"/>
        <dbReference type="ChEBI" id="CHEBI:61977"/>
        <dbReference type="ChEBI" id="CHEBI:83586"/>
        <dbReference type="ChEBI" id="CHEBI:456215"/>
        <dbReference type="ChEBI" id="CHEBI:456216"/>
        <dbReference type="EC" id="2.7.11.32"/>
    </reaction>
</comment>
<comment type="catalytic activity">
    <reaction evidence="1">
        <text>N(tele)-phospho-L-histidyl/O-phospho-L-threonyl-[pyruvate, phosphate dikinase] + phosphate + H(+) = N(tele)-phospho-L-histidyl/L-threonyl-[pyruvate, phosphate dikinase] + diphosphate</text>
        <dbReference type="Rhea" id="RHEA:43696"/>
        <dbReference type="Rhea" id="RHEA-COMP:10650"/>
        <dbReference type="Rhea" id="RHEA-COMP:10651"/>
        <dbReference type="ChEBI" id="CHEBI:15378"/>
        <dbReference type="ChEBI" id="CHEBI:30013"/>
        <dbReference type="ChEBI" id="CHEBI:33019"/>
        <dbReference type="ChEBI" id="CHEBI:43474"/>
        <dbReference type="ChEBI" id="CHEBI:61977"/>
        <dbReference type="ChEBI" id="CHEBI:83586"/>
        <dbReference type="EC" id="2.7.4.27"/>
    </reaction>
</comment>
<comment type="similarity">
    <text evidence="1">Belongs to the pyruvate, phosphate/water dikinase regulatory protein family. PDRP subfamily.</text>
</comment>
<gene>
    <name type="ordered locus">RAF_ORF0001</name>
</gene>
<reference key="1">
    <citation type="journal article" date="2009" name="BMC Genomics">
        <title>Analysis of the Rickettsia africae genome reveals that virulence acquisition in Rickettsia species may be explained by genome reduction.</title>
        <authorList>
            <person name="Fournier P.-E."/>
            <person name="El Karkouri K."/>
            <person name="Leroy Q."/>
            <person name="Robert C."/>
            <person name="Giumelli B."/>
            <person name="Renesto P."/>
            <person name="Socolovschi C."/>
            <person name="Parola P."/>
            <person name="Audic S."/>
            <person name="Raoult D."/>
        </authorList>
    </citation>
    <scope>NUCLEOTIDE SEQUENCE [LARGE SCALE GENOMIC DNA]</scope>
    <source>
        <strain>ESF-5</strain>
    </source>
</reference>
<feature type="chain" id="PRO_1000213456" description="Putative pyruvate, phosphate dikinase regulatory protein">
    <location>
        <begin position="1"/>
        <end position="273"/>
    </location>
</feature>
<feature type="binding site" evidence="1">
    <location>
        <begin position="149"/>
        <end position="156"/>
    </location>
    <ligand>
        <name>ADP</name>
        <dbReference type="ChEBI" id="CHEBI:456216"/>
    </ligand>
</feature>
<dbReference type="EC" id="2.7.11.32" evidence="1"/>
<dbReference type="EC" id="2.7.4.27" evidence="1"/>
<dbReference type="EMBL" id="CP001612">
    <property type="protein sequence ID" value="ACP52989.1"/>
    <property type="molecule type" value="Genomic_DNA"/>
</dbReference>
<dbReference type="RefSeq" id="WP_012719301.1">
    <property type="nucleotide sequence ID" value="NC_012633.1"/>
</dbReference>
<dbReference type="SMR" id="C3PM29"/>
<dbReference type="KEGG" id="raf:RAF_ORF0001"/>
<dbReference type="HOGENOM" id="CLU_046206_2_0_5"/>
<dbReference type="Proteomes" id="UP000002305">
    <property type="component" value="Chromosome"/>
</dbReference>
<dbReference type="GO" id="GO:0043531">
    <property type="term" value="F:ADP binding"/>
    <property type="evidence" value="ECO:0007669"/>
    <property type="project" value="UniProtKB-UniRule"/>
</dbReference>
<dbReference type="GO" id="GO:0005524">
    <property type="term" value="F:ATP binding"/>
    <property type="evidence" value="ECO:0007669"/>
    <property type="project" value="InterPro"/>
</dbReference>
<dbReference type="GO" id="GO:0016776">
    <property type="term" value="F:phosphotransferase activity, phosphate group as acceptor"/>
    <property type="evidence" value="ECO:0007669"/>
    <property type="project" value="UniProtKB-UniRule"/>
</dbReference>
<dbReference type="GO" id="GO:0004674">
    <property type="term" value="F:protein serine/threonine kinase activity"/>
    <property type="evidence" value="ECO:0007669"/>
    <property type="project" value="UniProtKB-UniRule"/>
</dbReference>
<dbReference type="HAMAP" id="MF_00921">
    <property type="entry name" value="PDRP"/>
    <property type="match status" value="1"/>
</dbReference>
<dbReference type="InterPro" id="IPR005177">
    <property type="entry name" value="Kinase-pyrophosphorylase"/>
</dbReference>
<dbReference type="InterPro" id="IPR026565">
    <property type="entry name" value="PPDK_reg"/>
</dbReference>
<dbReference type="NCBIfam" id="NF003742">
    <property type="entry name" value="PRK05339.1"/>
    <property type="match status" value="1"/>
</dbReference>
<dbReference type="PANTHER" id="PTHR31756">
    <property type="entry name" value="PYRUVATE, PHOSPHATE DIKINASE REGULATORY PROTEIN 1, CHLOROPLASTIC"/>
    <property type="match status" value="1"/>
</dbReference>
<dbReference type="PANTHER" id="PTHR31756:SF3">
    <property type="entry name" value="PYRUVATE, PHOSPHATE DIKINASE REGULATORY PROTEIN 1, CHLOROPLASTIC"/>
    <property type="match status" value="1"/>
</dbReference>
<dbReference type="Pfam" id="PF03618">
    <property type="entry name" value="Kinase-PPPase"/>
    <property type="match status" value="1"/>
</dbReference>
<evidence type="ECO:0000255" key="1">
    <source>
        <dbReference type="HAMAP-Rule" id="MF_00921"/>
    </source>
</evidence>
<proteinExistence type="inferred from homology"/>
<keyword id="KW-0418">Kinase</keyword>
<keyword id="KW-0547">Nucleotide-binding</keyword>
<keyword id="KW-0723">Serine/threonine-protein kinase</keyword>
<keyword id="KW-0808">Transferase</keyword>
<protein>
    <recommendedName>
        <fullName evidence="1">Putative pyruvate, phosphate dikinase regulatory protein</fullName>
        <shortName evidence="1">PPDK regulatory protein</shortName>
        <ecNumber evidence="1">2.7.11.32</ecNumber>
        <ecNumber evidence="1">2.7.4.27</ecNumber>
    </recommendedName>
</protein>
<sequence length="273" mass="31706">MTKLIIHLVSDSSVQTAKYTANSALAQFTSVKPKLYHWPMIRNLELLNEVLSKIEYKHGIVLYTIADQELRKTLTKFCYELKIPCISVIGKIIKEMSVFSGIEIEKEQNYNYKFDKTYFDTLNAIDYAIRHDDGQMLNELLEADIILIGPSRTSKTPTSVFLAYNGLKAANIPYVYNCPFPDFIEKDIDQLVVGLVINPNRLIEIREARLNLLQINENKSYTDFNIVQKECLEVRKICDQRNWPVIDVSTRSIEETAALIMRIYYNRKNKYNK</sequence>
<organism>
    <name type="scientific">Rickettsia africae (strain ESF-5)</name>
    <dbReference type="NCBI Taxonomy" id="347255"/>
    <lineage>
        <taxon>Bacteria</taxon>
        <taxon>Pseudomonadati</taxon>
        <taxon>Pseudomonadota</taxon>
        <taxon>Alphaproteobacteria</taxon>
        <taxon>Rickettsiales</taxon>
        <taxon>Rickettsiaceae</taxon>
        <taxon>Rickettsieae</taxon>
        <taxon>Rickettsia</taxon>
        <taxon>spotted fever group</taxon>
    </lineage>
</organism>
<accession>C3PM29</accession>